<reference key="1">
    <citation type="journal article" date="1994" name="J. Exp. Med.">
        <title>Genetic locus for the biosynthesis of the variable portion of Neisseria gonorrhoeae lipooligosaccharide.</title>
        <authorList>
            <person name="Gotschlich E.C."/>
        </authorList>
    </citation>
    <scope>NUCLEOTIDE SEQUENCE [GENOMIC DNA]</scope>
    <source>
        <strain>ATCC 33084 / F62 / M-1914</strain>
    </source>
</reference>
<sequence length="279" mass="31776">MQNHVISLASAAERRAHIAATFGSRGIPFQFFDALMPSERLERAMAELVPGLSAHPYLSGVEKACFMSHAVLWEQALDEGVPYIAVFEDDVLLGEGAEQFLAEDTWLQERFDPDSAFVVRLETMFMHVLTSPSGVADYGGRAFPLLESEHCGTAGYIISRKAMRFFLDRFAVLPPERLHPVDLMMFGNPDDREGMPVCQLNPALCAQELHYAKFHDQNSALGSLIEHDRRLNRKQQWRDSPANTFKHRLIRALTKIGREREKRRQRREQLIGKIIVPFQ</sequence>
<protein>
    <recommendedName>
        <fullName>Lacto-N-neotetraose biosynthesis glycosyltransferase LgtB</fullName>
        <ecNumber>2.-.-.-</ecNumber>
    </recommendedName>
</protein>
<dbReference type="EC" id="2.-.-.-"/>
<dbReference type="EMBL" id="U14554">
    <property type="protein sequence ID" value="AAA68010.1"/>
    <property type="molecule type" value="Genomic_DNA"/>
</dbReference>
<dbReference type="SMR" id="Q50947"/>
<dbReference type="CAZy" id="GT25">
    <property type="family name" value="Glycosyltransferase Family 25"/>
</dbReference>
<dbReference type="UniPathway" id="UPA00501"/>
<dbReference type="UniPathway" id="UPA00820"/>
<dbReference type="GO" id="GO:0016757">
    <property type="term" value="F:glycosyltransferase activity"/>
    <property type="evidence" value="ECO:0007669"/>
    <property type="project" value="UniProtKB-KW"/>
</dbReference>
<dbReference type="GO" id="GO:0009103">
    <property type="term" value="P:lipopolysaccharide biosynthetic process"/>
    <property type="evidence" value="ECO:0007669"/>
    <property type="project" value="UniProtKB-KW"/>
</dbReference>
<dbReference type="CDD" id="cd06532">
    <property type="entry name" value="Glyco_transf_25"/>
    <property type="match status" value="1"/>
</dbReference>
<dbReference type="InterPro" id="IPR002654">
    <property type="entry name" value="Glyco_trans_25"/>
</dbReference>
<dbReference type="Pfam" id="PF01755">
    <property type="entry name" value="Glyco_transf_25"/>
    <property type="match status" value="1"/>
</dbReference>
<comment type="function">
    <text>Adds the second galactose to the lacto-N-tetraose chain in lipooligosaccharide (LOS).</text>
</comment>
<comment type="pathway">
    <text>Glycan metabolism; lacto-N-neotetraose biosynthesis.</text>
</comment>
<comment type="pathway">
    <text>Bacterial outer membrane biogenesis; lipooligosaccharide biosynthesis.</text>
</comment>
<comment type="similarity">
    <text evidence="1">Belongs to the glycosyltransferase 25 family.</text>
</comment>
<accession>Q50947</accession>
<organism>
    <name type="scientific">Neisseria gonorrhoeae</name>
    <dbReference type="NCBI Taxonomy" id="485"/>
    <lineage>
        <taxon>Bacteria</taxon>
        <taxon>Pseudomonadati</taxon>
        <taxon>Pseudomonadota</taxon>
        <taxon>Betaproteobacteria</taxon>
        <taxon>Neisseriales</taxon>
        <taxon>Neisseriaceae</taxon>
        <taxon>Neisseria</taxon>
    </lineage>
</organism>
<proteinExistence type="inferred from homology"/>
<keyword id="KW-0328">Glycosyltransferase</keyword>
<keyword id="KW-0448">Lipopolysaccharide biosynthesis</keyword>
<keyword id="KW-0808">Transferase</keyword>
<gene>
    <name type="primary">lgtB</name>
</gene>
<name>LGTB_NEIGO</name>
<feature type="chain" id="PRO_0000216235" description="Lacto-N-neotetraose biosynthesis glycosyltransferase LgtB">
    <location>
        <begin position="1"/>
        <end position="279"/>
    </location>
</feature>
<evidence type="ECO:0000305" key="1"/>